<keyword id="KW-0067">ATP-binding</keyword>
<keyword id="KW-1003">Cell membrane</keyword>
<keyword id="KW-0963">Cytoplasm</keyword>
<keyword id="KW-0472">Membrane</keyword>
<keyword id="KW-0547">Nucleotide-binding</keyword>
<keyword id="KW-0653">Protein transport</keyword>
<keyword id="KW-1185">Reference proteome</keyword>
<keyword id="KW-1278">Translocase</keyword>
<keyword id="KW-0811">Translocation</keyword>
<keyword id="KW-0813">Transport</keyword>
<proteinExistence type="inferred from homology"/>
<gene>
    <name evidence="1" type="primary">secA</name>
    <name type="ordered locus">DR_0575</name>
</gene>
<sequence>MFRVLNKVFDNNKRDVERIIQTVVKPVNALEEETMRVENLAEAFMDLRRRVQDGGESLDSLIVPAFALIREAGRRSIGKRHYDTQLIGGAALHQGRIAEMRTGEGKTLVATLALAFNALEGKGCHLVTVNDYLARVGMEEMGLLYRTLGLTVGLANRELSPAEKQAAYACDITYVTNSELGFDYLRDNMAQSKEALVLRADTPLHYAIVDEVDSILIDEARTPLIISGAAEKATDLYYVFAKLIRRLQKGEPAEPGVRTEPTGDYTIEEKSKAVHLTEQGITKIERLLSLKDLYSPENMDKAHMITQAIRARELYHREKDYIVNAEGEVVIVDEFTGRSMPGRRYGEGLHQAIEAKEGVKIENENQTLATITYQNFFRLYDKFAGMTGTAKTEEKEFLDIYGSDVLVIPTNKPVIRVDSDDLIYRTRMGKYAAVVGEVQEMHATGRPILIGTASIETSEQLSSLLQQAGVQHAVLNAKFEAQEASIIAQAGRSGTVTIATNMAGRGTDIMLGGNDEYIIGESIEQQLGVSRYAPEVEAFIKAISREDPAAEQLGMQIPGITLDFIRQAQELHRATVEDRQRVRDLGGLHIVGTERHESRRIDNQLRGRAGRQGDPGSSRFYVSFEDDLMRLFANDRVVGMMDRLGMDDSQPIEAKMVTGAIEKAQARVEDRNFGIRKQLLEFDNVMSKQRDEIYAQRREVLLGPDEDIEETTEGMIGDFVDSQLAAYAPIEVSHEQWDIEQLRSAMVEAVPALETFDFESLRVNSPAEAQDRLLSAVADAFDARKEELSPTMMNSLARYVLLQVVDQHWKEHLHGMDVLRQGIGLRGYGQRDPFTEYKFEATNMFNEMIDALKADVTKFIFRMQFGGA</sequence>
<evidence type="ECO:0000255" key="1">
    <source>
        <dbReference type="HAMAP-Rule" id="MF_01382"/>
    </source>
</evidence>
<evidence type="ECO:0000305" key="2"/>
<reference key="1">
    <citation type="journal article" date="1999" name="Science">
        <title>Genome sequence of the radioresistant bacterium Deinococcus radiodurans R1.</title>
        <authorList>
            <person name="White O."/>
            <person name="Eisen J.A."/>
            <person name="Heidelberg J.F."/>
            <person name="Hickey E.K."/>
            <person name="Peterson J.D."/>
            <person name="Dodson R.J."/>
            <person name="Haft D.H."/>
            <person name="Gwinn M.L."/>
            <person name="Nelson W.C."/>
            <person name="Richardson D.L."/>
            <person name="Moffat K.S."/>
            <person name="Qin H."/>
            <person name="Jiang L."/>
            <person name="Pamphile W."/>
            <person name="Crosby M."/>
            <person name="Shen M."/>
            <person name="Vamathevan J.J."/>
            <person name="Lam P."/>
            <person name="McDonald L.A."/>
            <person name="Utterback T.R."/>
            <person name="Zalewski C."/>
            <person name="Makarova K.S."/>
            <person name="Aravind L."/>
            <person name="Daly M.J."/>
            <person name="Minton K.W."/>
            <person name="Fleischmann R.D."/>
            <person name="Ketchum K.A."/>
            <person name="Nelson K.E."/>
            <person name="Salzberg S.L."/>
            <person name="Smith H.O."/>
            <person name="Venter J.C."/>
            <person name="Fraser C.M."/>
        </authorList>
    </citation>
    <scope>NUCLEOTIDE SEQUENCE [LARGE SCALE GENOMIC DNA]</scope>
    <source>
        <strain>ATCC 13939 / DSM 20539 / JCM 16871 / CCUG 27074 / LMG 4051 / NBRC 15346 / NCIMB 9279 / VKM B-1422 / R1</strain>
    </source>
</reference>
<dbReference type="EC" id="7.4.2.8" evidence="1"/>
<dbReference type="EMBL" id="AE000513">
    <property type="protein sequence ID" value="AAF10155.1"/>
    <property type="status" value="ALT_INIT"/>
    <property type="molecule type" value="Genomic_DNA"/>
</dbReference>
<dbReference type="PIR" id="D75501">
    <property type="entry name" value="D75501"/>
</dbReference>
<dbReference type="RefSeq" id="NP_294298.2">
    <property type="nucleotide sequence ID" value="NC_001263.1"/>
</dbReference>
<dbReference type="RefSeq" id="WP_010887220.1">
    <property type="nucleotide sequence ID" value="NC_001263.1"/>
</dbReference>
<dbReference type="SMR" id="Q9RWU0"/>
<dbReference type="FunCoup" id="Q9RWU0">
    <property type="interactions" value="444"/>
</dbReference>
<dbReference type="STRING" id="243230.DR_0575"/>
<dbReference type="PaxDb" id="243230-DR_0575"/>
<dbReference type="EnsemblBacteria" id="AAF10155">
    <property type="protein sequence ID" value="AAF10155"/>
    <property type="gene ID" value="DR_0575"/>
</dbReference>
<dbReference type="GeneID" id="69516818"/>
<dbReference type="KEGG" id="dra:DR_0575"/>
<dbReference type="PATRIC" id="fig|243230.17.peg.753"/>
<dbReference type="eggNOG" id="COG0653">
    <property type="taxonomic scope" value="Bacteria"/>
</dbReference>
<dbReference type="HOGENOM" id="CLU_005314_3_2_0"/>
<dbReference type="InParanoid" id="Q9RWU0"/>
<dbReference type="OrthoDB" id="9805579at2"/>
<dbReference type="Proteomes" id="UP000002524">
    <property type="component" value="Chromosome 1"/>
</dbReference>
<dbReference type="GO" id="GO:0031522">
    <property type="term" value="C:cell envelope Sec protein transport complex"/>
    <property type="evidence" value="ECO:0000318"/>
    <property type="project" value="GO_Central"/>
</dbReference>
<dbReference type="GO" id="GO:0005737">
    <property type="term" value="C:cytoplasm"/>
    <property type="evidence" value="ECO:0007669"/>
    <property type="project" value="UniProtKB-SubCell"/>
</dbReference>
<dbReference type="GO" id="GO:0005886">
    <property type="term" value="C:plasma membrane"/>
    <property type="evidence" value="ECO:0000318"/>
    <property type="project" value="GO_Central"/>
</dbReference>
<dbReference type="GO" id="GO:0005524">
    <property type="term" value="F:ATP binding"/>
    <property type="evidence" value="ECO:0000318"/>
    <property type="project" value="GO_Central"/>
</dbReference>
<dbReference type="GO" id="GO:0008564">
    <property type="term" value="F:protein-exporting ATPase activity"/>
    <property type="evidence" value="ECO:0007669"/>
    <property type="project" value="UniProtKB-EC"/>
</dbReference>
<dbReference type="GO" id="GO:0065002">
    <property type="term" value="P:intracellular protein transmembrane transport"/>
    <property type="evidence" value="ECO:0007669"/>
    <property type="project" value="UniProtKB-UniRule"/>
</dbReference>
<dbReference type="GO" id="GO:0017038">
    <property type="term" value="P:protein import"/>
    <property type="evidence" value="ECO:0007669"/>
    <property type="project" value="InterPro"/>
</dbReference>
<dbReference type="GO" id="GO:0006605">
    <property type="term" value="P:protein targeting"/>
    <property type="evidence" value="ECO:0007669"/>
    <property type="project" value="UniProtKB-UniRule"/>
</dbReference>
<dbReference type="GO" id="GO:0043952">
    <property type="term" value="P:protein transport by the Sec complex"/>
    <property type="evidence" value="ECO:0000318"/>
    <property type="project" value="GO_Central"/>
</dbReference>
<dbReference type="CDD" id="cd17928">
    <property type="entry name" value="DEXDc_SecA"/>
    <property type="match status" value="1"/>
</dbReference>
<dbReference type="CDD" id="cd18803">
    <property type="entry name" value="SF2_C_secA"/>
    <property type="match status" value="1"/>
</dbReference>
<dbReference type="FunFam" id="1.10.3060.10:FF:000003">
    <property type="entry name" value="Protein translocase subunit SecA"/>
    <property type="match status" value="1"/>
</dbReference>
<dbReference type="FunFam" id="3.40.50.300:FF:001790">
    <property type="entry name" value="Protein translocase subunit SecA"/>
    <property type="match status" value="1"/>
</dbReference>
<dbReference type="FunFam" id="3.90.1440.10:FF:000002">
    <property type="entry name" value="Protein translocase subunit SecA"/>
    <property type="match status" value="1"/>
</dbReference>
<dbReference type="Gene3D" id="1.10.3060.10">
    <property type="entry name" value="Helical scaffold and wing domains of SecA"/>
    <property type="match status" value="1"/>
</dbReference>
<dbReference type="Gene3D" id="3.40.50.300">
    <property type="entry name" value="P-loop containing nucleotide triphosphate hydrolases"/>
    <property type="match status" value="2"/>
</dbReference>
<dbReference type="Gene3D" id="3.90.1440.10">
    <property type="entry name" value="SecA, preprotein cross-linking domain"/>
    <property type="match status" value="1"/>
</dbReference>
<dbReference type="HAMAP" id="MF_01382">
    <property type="entry name" value="SecA"/>
    <property type="match status" value="1"/>
</dbReference>
<dbReference type="InterPro" id="IPR014001">
    <property type="entry name" value="Helicase_ATP-bd"/>
</dbReference>
<dbReference type="InterPro" id="IPR027417">
    <property type="entry name" value="P-loop_NTPase"/>
</dbReference>
<dbReference type="InterPro" id="IPR000185">
    <property type="entry name" value="SecA"/>
</dbReference>
<dbReference type="InterPro" id="IPR020937">
    <property type="entry name" value="SecA_CS"/>
</dbReference>
<dbReference type="InterPro" id="IPR011115">
    <property type="entry name" value="SecA_DEAD"/>
</dbReference>
<dbReference type="InterPro" id="IPR014018">
    <property type="entry name" value="SecA_motor_DEAD"/>
</dbReference>
<dbReference type="InterPro" id="IPR011130">
    <property type="entry name" value="SecA_preprotein_X-link_dom"/>
</dbReference>
<dbReference type="InterPro" id="IPR044722">
    <property type="entry name" value="SecA_SF2_C"/>
</dbReference>
<dbReference type="InterPro" id="IPR011116">
    <property type="entry name" value="SecA_Wing/Scaffold"/>
</dbReference>
<dbReference type="InterPro" id="IPR036266">
    <property type="entry name" value="SecA_Wing/Scaffold_sf"/>
</dbReference>
<dbReference type="InterPro" id="IPR036670">
    <property type="entry name" value="SecA_X-link_sf"/>
</dbReference>
<dbReference type="NCBIfam" id="NF009538">
    <property type="entry name" value="PRK12904.1"/>
    <property type="match status" value="1"/>
</dbReference>
<dbReference type="NCBIfam" id="TIGR00963">
    <property type="entry name" value="secA"/>
    <property type="match status" value="1"/>
</dbReference>
<dbReference type="PANTHER" id="PTHR30612:SF0">
    <property type="entry name" value="CHLOROPLAST PROTEIN-TRANSPORTING ATPASE"/>
    <property type="match status" value="1"/>
</dbReference>
<dbReference type="PANTHER" id="PTHR30612">
    <property type="entry name" value="SECA INNER MEMBRANE COMPONENT OF SEC PROTEIN SECRETION SYSTEM"/>
    <property type="match status" value="1"/>
</dbReference>
<dbReference type="Pfam" id="PF21090">
    <property type="entry name" value="P-loop_SecA"/>
    <property type="match status" value="1"/>
</dbReference>
<dbReference type="Pfam" id="PF07517">
    <property type="entry name" value="SecA_DEAD"/>
    <property type="match status" value="1"/>
</dbReference>
<dbReference type="Pfam" id="PF01043">
    <property type="entry name" value="SecA_PP_bind"/>
    <property type="match status" value="1"/>
</dbReference>
<dbReference type="Pfam" id="PF07516">
    <property type="entry name" value="SecA_SW"/>
    <property type="match status" value="1"/>
</dbReference>
<dbReference type="PRINTS" id="PR00906">
    <property type="entry name" value="SECA"/>
</dbReference>
<dbReference type="SMART" id="SM00957">
    <property type="entry name" value="SecA_DEAD"/>
    <property type="match status" value="1"/>
</dbReference>
<dbReference type="SMART" id="SM00958">
    <property type="entry name" value="SecA_PP_bind"/>
    <property type="match status" value="1"/>
</dbReference>
<dbReference type="SUPFAM" id="SSF81886">
    <property type="entry name" value="Helical scaffold and wing domains of SecA"/>
    <property type="match status" value="1"/>
</dbReference>
<dbReference type="SUPFAM" id="SSF52540">
    <property type="entry name" value="P-loop containing nucleoside triphosphate hydrolases"/>
    <property type="match status" value="2"/>
</dbReference>
<dbReference type="SUPFAM" id="SSF81767">
    <property type="entry name" value="Pre-protein crosslinking domain of SecA"/>
    <property type="match status" value="1"/>
</dbReference>
<dbReference type="PROSITE" id="PS01312">
    <property type="entry name" value="SECA"/>
    <property type="match status" value="1"/>
</dbReference>
<dbReference type="PROSITE" id="PS51196">
    <property type="entry name" value="SECA_MOTOR_DEAD"/>
    <property type="match status" value="1"/>
</dbReference>
<organism>
    <name type="scientific">Deinococcus radiodurans (strain ATCC 13939 / DSM 20539 / JCM 16871 / CCUG 27074 / LMG 4051 / NBRC 15346 / NCIMB 9279 / VKM B-1422 / R1)</name>
    <dbReference type="NCBI Taxonomy" id="243230"/>
    <lineage>
        <taxon>Bacteria</taxon>
        <taxon>Thermotogati</taxon>
        <taxon>Deinococcota</taxon>
        <taxon>Deinococci</taxon>
        <taxon>Deinococcales</taxon>
        <taxon>Deinococcaceae</taxon>
        <taxon>Deinococcus</taxon>
    </lineage>
</organism>
<name>SECA_DEIRA</name>
<comment type="function">
    <text evidence="1">Part of the Sec protein translocase complex. Interacts with the SecYEG preprotein conducting channel. Has a central role in coupling the hydrolysis of ATP to the transfer of proteins into and across the cell membrane, serving as an ATP-driven molecular motor driving the stepwise translocation of polypeptide chains across the membrane.</text>
</comment>
<comment type="catalytic activity">
    <reaction evidence="1">
        <text>ATP + H2O + cellular proteinSide 1 = ADP + phosphate + cellular proteinSide 2.</text>
        <dbReference type="EC" id="7.4.2.8"/>
    </reaction>
</comment>
<comment type="subunit">
    <text evidence="1">Monomer and homodimer. Part of the essential Sec protein translocation apparatus which comprises SecA, SecYEG and auxiliary proteins SecDF. Other proteins may also be involved.</text>
</comment>
<comment type="subcellular location">
    <subcellularLocation>
        <location evidence="1">Cell membrane</location>
        <topology evidence="1">Peripheral membrane protein</topology>
        <orientation evidence="1">Cytoplasmic side</orientation>
    </subcellularLocation>
    <subcellularLocation>
        <location evidence="1">Cytoplasm</location>
    </subcellularLocation>
    <text evidence="1">Distribution is 50-50.</text>
</comment>
<comment type="similarity">
    <text evidence="1">Belongs to the SecA family.</text>
</comment>
<comment type="sequence caution" evidence="2">
    <conflict type="erroneous initiation">
        <sequence resource="EMBL-CDS" id="AAF10155"/>
    </conflict>
    <text>Extended N-terminus.</text>
</comment>
<feature type="chain" id="PRO_0000320792" description="Protein translocase subunit SecA">
    <location>
        <begin position="1"/>
        <end position="868"/>
    </location>
</feature>
<feature type="binding site" evidence="1">
    <location>
        <position position="85"/>
    </location>
    <ligand>
        <name>ATP</name>
        <dbReference type="ChEBI" id="CHEBI:30616"/>
    </ligand>
</feature>
<feature type="binding site" evidence="1">
    <location>
        <begin position="103"/>
        <end position="107"/>
    </location>
    <ligand>
        <name>ATP</name>
        <dbReference type="ChEBI" id="CHEBI:30616"/>
    </ligand>
</feature>
<feature type="binding site" evidence="1">
    <location>
        <position position="508"/>
    </location>
    <ligand>
        <name>ATP</name>
        <dbReference type="ChEBI" id="CHEBI:30616"/>
    </ligand>
</feature>
<protein>
    <recommendedName>
        <fullName evidence="1">Protein translocase subunit SecA</fullName>
        <ecNumber evidence="1">7.4.2.8</ecNumber>
    </recommendedName>
</protein>
<accession>Q9RWU0</accession>